<protein>
    <recommendedName>
        <fullName evidence="1">Probable potassium transport system protein Kup</fullName>
    </recommendedName>
</protein>
<feature type="chain" id="PRO_0000209007" description="Probable potassium transport system protein Kup">
    <location>
        <begin position="1"/>
        <end position="613"/>
    </location>
</feature>
<feature type="transmembrane region" description="Helical" evidence="1">
    <location>
        <begin position="38"/>
        <end position="58"/>
    </location>
</feature>
<feature type="transmembrane region" description="Helical" evidence="1">
    <location>
        <begin position="91"/>
        <end position="111"/>
    </location>
</feature>
<feature type="transmembrane region" description="Helical" evidence="1">
    <location>
        <begin position="128"/>
        <end position="148"/>
    </location>
</feature>
<feature type="transmembrane region" description="Helical" evidence="1">
    <location>
        <begin position="159"/>
        <end position="179"/>
    </location>
</feature>
<feature type="transmembrane region" description="Helical" evidence="1">
    <location>
        <begin position="206"/>
        <end position="226"/>
    </location>
</feature>
<feature type="transmembrane region" description="Helical" evidence="1">
    <location>
        <begin position="238"/>
        <end position="258"/>
    </location>
</feature>
<feature type="transmembrane region" description="Helical" evidence="1">
    <location>
        <begin position="270"/>
        <end position="290"/>
    </location>
</feature>
<feature type="transmembrane region" description="Helical" evidence="1">
    <location>
        <begin position="328"/>
        <end position="348"/>
    </location>
</feature>
<feature type="transmembrane region" description="Helical" evidence="1">
    <location>
        <begin position="357"/>
        <end position="377"/>
    </location>
</feature>
<feature type="transmembrane region" description="Helical" evidence="1">
    <location>
        <begin position="387"/>
        <end position="407"/>
    </location>
</feature>
<feature type="transmembrane region" description="Helical" evidence="1">
    <location>
        <begin position="410"/>
        <end position="430"/>
    </location>
</feature>
<proteinExistence type="inferred from homology"/>
<reference key="1">
    <citation type="journal article" date="2002" name="Proc. Natl. Acad. Sci. U.S.A.">
        <title>The complete genome sequence of Chlorobium tepidum TLS, a photosynthetic, anaerobic, green-sulfur bacterium.</title>
        <authorList>
            <person name="Eisen J.A."/>
            <person name="Nelson K.E."/>
            <person name="Paulsen I.T."/>
            <person name="Heidelberg J.F."/>
            <person name="Wu M."/>
            <person name="Dodson R.J."/>
            <person name="DeBoy R.T."/>
            <person name="Gwinn M.L."/>
            <person name="Nelson W.C."/>
            <person name="Haft D.H."/>
            <person name="Hickey E.K."/>
            <person name="Peterson J.D."/>
            <person name="Durkin A.S."/>
            <person name="Kolonay J.F."/>
            <person name="Yang F."/>
            <person name="Holt I.E."/>
            <person name="Umayam L.A."/>
            <person name="Mason T.M."/>
            <person name="Brenner M."/>
            <person name="Shea T.P."/>
            <person name="Parksey D.S."/>
            <person name="Nierman W.C."/>
            <person name="Feldblyum T.V."/>
            <person name="Hansen C.L."/>
            <person name="Craven M.B."/>
            <person name="Radune D."/>
            <person name="Vamathevan J.J."/>
            <person name="Khouri H.M."/>
            <person name="White O."/>
            <person name="Gruber T.M."/>
            <person name="Ketchum K.A."/>
            <person name="Venter J.C."/>
            <person name="Tettelin H."/>
            <person name="Bryant D.A."/>
            <person name="Fraser C.M."/>
        </authorList>
    </citation>
    <scope>NUCLEOTIDE SEQUENCE [LARGE SCALE GENOMIC DNA]</scope>
    <source>
        <strain>ATCC 49652 / DSM 12025 / NBRC 103806 / TLS</strain>
    </source>
</reference>
<organism>
    <name type="scientific">Chlorobaculum tepidum (strain ATCC 49652 / DSM 12025 / NBRC 103806 / TLS)</name>
    <name type="common">Chlorobium tepidum</name>
    <dbReference type="NCBI Taxonomy" id="194439"/>
    <lineage>
        <taxon>Bacteria</taxon>
        <taxon>Pseudomonadati</taxon>
        <taxon>Chlorobiota</taxon>
        <taxon>Chlorobiia</taxon>
        <taxon>Chlorobiales</taxon>
        <taxon>Chlorobiaceae</taxon>
        <taxon>Chlorobaculum</taxon>
    </lineage>
</organism>
<gene>
    <name evidence="1" type="primary">kup</name>
    <name type="ordered locus">CT2073</name>
</gene>
<evidence type="ECO:0000255" key="1">
    <source>
        <dbReference type="HAMAP-Rule" id="MF_01522"/>
    </source>
</evidence>
<accession>Q8KAT2</accession>
<name>KUP_CHLTE</name>
<comment type="function">
    <text evidence="1">Transport of potassium into the cell. Likely operates as a K(+):H(+) symporter.</text>
</comment>
<comment type="catalytic activity">
    <reaction evidence="1">
        <text>K(+)(in) + H(+)(in) = K(+)(out) + H(+)(out)</text>
        <dbReference type="Rhea" id="RHEA:28490"/>
        <dbReference type="ChEBI" id="CHEBI:15378"/>
        <dbReference type="ChEBI" id="CHEBI:29103"/>
    </reaction>
    <physiologicalReaction direction="right-to-left" evidence="1">
        <dbReference type="Rhea" id="RHEA:28492"/>
    </physiologicalReaction>
</comment>
<comment type="subcellular location">
    <subcellularLocation>
        <location evidence="1">Cell inner membrane</location>
        <topology evidence="1">Multi-pass membrane protein</topology>
    </subcellularLocation>
</comment>
<comment type="similarity">
    <text evidence="1">Belongs to the HAK/KUP transporter (TC 2.A.72) family.</text>
</comment>
<dbReference type="EMBL" id="AE006470">
    <property type="protein sequence ID" value="AAM73290.1"/>
    <property type="molecule type" value="Genomic_DNA"/>
</dbReference>
<dbReference type="RefSeq" id="NP_662948.1">
    <property type="nucleotide sequence ID" value="NC_002932.3"/>
</dbReference>
<dbReference type="SMR" id="Q8KAT2"/>
<dbReference type="STRING" id="194439.CT2073"/>
<dbReference type="EnsemblBacteria" id="AAM73290">
    <property type="protein sequence ID" value="AAM73290"/>
    <property type="gene ID" value="CT2073"/>
</dbReference>
<dbReference type="KEGG" id="cte:CT2073"/>
<dbReference type="PATRIC" id="fig|194439.7.peg.1879"/>
<dbReference type="eggNOG" id="COG3158">
    <property type="taxonomic scope" value="Bacteria"/>
</dbReference>
<dbReference type="HOGENOM" id="CLU_008142_4_2_10"/>
<dbReference type="OrthoDB" id="9805577at2"/>
<dbReference type="Proteomes" id="UP000001007">
    <property type="component" value="Chromosome"/>
</dbReference>
<dbReference type="GO" id="GO:0005886">
    <property type="term" value="C:plasma membrane"/>
    <property type="evidence" value="ECO:0007669"/>
    <property type="project" value="UniProtKB-SubCell"/>
</dbReference>
<dbReference type="GO" id="GO:0015079">
    <property type="term" value="F:potassium ion transmembrane transporter activity"/>
    <property type="evidence" value="ECO:0007669"/>
    <property type="project" value="UniProtKB-UniRule"/>
</dbReference>
<dbReference type="GO" id="GO:0015293">
    <property type="term" value="F:symporter activity"/>
    <property type="evidence" value="ECO:0007669"/>
    <property type="project" value="UniProtKB-UniRule"/>
</dbReference>
<dbReference type="HAMAP" id="MF_01522">
    <property type="entry name" value="Kup"/>
    <property type="match status" value="1"/>
</dbReference>
<dbReference type="InterPro" id="IPR003855">
    <property type="entry name" value="K+_transporter"/>
</dbReference>
<dbReference type="InterPro" id="IPR053952">
    <property type="entry name" value="K_trans_C"/>
</dbReference>
<dbReference type="InterPro" id="IPR053951">
    <property type="entry name" value="K_trans_N"/>
</dbReference>
<dbReference type="InterPro" id="IPR023051">
    <property type="entry name" value="Kup"/>
</dbReference>
<dbReference type="PANTHER" id="PTHR30540:SF79">
    <property type="entry name" value="LOW AFFINITY POTASSIUM TRANSPORT SYSTEM PROTEIN KUP"/>
    <property type="match status" value="1"/>
</dbReference>
<dbReference type="PANTHER" id="PTHR30540">
    <property type="entry name" value="OSMOTIC STRESS POTASSIUM TRANSPORTER"/>
    <property type="match status" value="1"/>
</dbReference>
<dbReference type="Pfam" id="PF02705">
    <property type="entry name" value="K_trans"/>
    <property type="match status" value="1"/>
</dbReference>
<dbReference type="Pfam" id="PF22776">
    <property type="entry name" value="K_trans_C"/>
    <property type="match status" value="1"/>
</dbReference>
<sequence length="613" mass="67390">MSLAALGVVFGDIGTSPLYAIRECFHGEFSIPVNTPNVLGVLSLLIWALLLIVTLKYLTFIMKADNEGEGGILALTALIISHSKKNKSERWILVSLGLFGAALLYGDGMITPSISVLSAVEGIQIIAPSFGPLVIPVTIAILAGLFLFQHHGTAKVGSFFGPIILLWFTSIGLCGLVEIVKYPAILKAVFPWYGLEFLVNNHAKGFLVLGAVFLAVTGAEALYADMGHFGRRPIRLTWSLLVLPALLLNYFGQGAVLLSEPAKSWNPFYALVPSWGIIPMVILATLATIIASQALITGIFSLTQQGIQLGYIPRLTVQHTSASHIGQIYVPAANWALMFSTIALVAGFGSSSKLASAYGVAVTATMLISAVLFYYVARDLWNWNRLGLNLLMGMFMLIDLSFFGASVSKLFHGAWFPLVIGFALFTLMLTWKQGRLLLMKQIQDRTLTVSEFTESLAIQQPQRVKGQAIYLTANPDVVPMALLHNMRHNKILHSEVGLLHFSTERVPRVPNSKKVEVIQLNYGMYKIIARYGFMEYPNIRQVLALANQQGMHFRTDAISYFINREKIVTGMKSKMSVWRKKLFALMARNALSATAYYDLPSGQVIEIGVQVQI</sequence>
<keyword id="KW-0997">Cell inner membrane</keyword>
<keyword id="KW-1003">Cell membrane</keyword>
<keyword id="KW-0406">Ion transport</keyword>
<keyword id="KW-0472">Membrane</keyword>
<keyword id="KW-0630">Potassium</keyword>
<keyword id="KW-0633">Potassium transport</keyword>
<keyword id="KW-1185">Reference proteome</keyword>
<keyword id="KW-0769">Symport</keyword>
<keyword id="KW-0812">Transmembrane</keyword>
<keyword id="KW-1133">Transmembrane helix</keyword>
<keyword id="KW-0813">Transport</keyword>